<dbReference type="EC" id="1.2.1.11" evidence="2"/>
<dbReference type="EMBL" id="AE005174">
    <property type="protein sequence ID" value="AAG58539.1"/>
    <property type="molecule type" value="Genomic_DNA"/>
</dbReference>
<dbReference type="EMBL" id="BA000007">
    <property type="protein sequence ID" value="BAB37701.1"/>
    <property type="molecule type" value="Genomic_DNA"/>
</dbReference>
<dbReference type="PIR" id="F91163">
    <property type="entry name" value="F91163"/>
</dbReference>
<dbReference type="PIR" id="G86009">
    <property type="entry name" value="G86009"/>
</dbReference>
<dbReference type="RefSeq" id="NP_312305.1">
    <property type="nucleotide sequence ID" value="NC_002695.1"/>
</dbReference>
<dbReference type="RefSeq" id="WP_000799956.1">
    <property type="nucleotide sequence ID" value="NZ_VOAI01000004.1"/>
</dbReference>
<dbReference type="SMR" id="P0A9R0"/>
<dbReference type="STRING" id="155864.Z4797"/>
<dbReference type="GeneID" id="75202278"/>
<dbReference type="GeneID" id="915867"/>
<dbReference type="KEGG" id="ece:Z4797"/>
<dbReference type="KEGG" id="ecs:ECs_4278"/>
<dbReference type="PATRIC" id="fig|386585.9.peg.4469"/>
<dbReference type="eggNOG" id="COG0136">
    <property type="taxonomic scope" value="Bacteria"/>
</dbReference>
<dbReference type="HOGENOM" id="CLU_066397_0_0_6"/>
<dbReference type="OMA" id="FVCGDNL"/>
<dbReference type="UniPathway" id="UPA00034">
    <property type="reaction ID" value="UER00016"/>
</dbReference>
<dbReference type="UniPathway" id="UPA00050">
    <property type="reaction ID" value="UER00463"/>
</dbReference>
<dbReference type="UniPathway" id="UPA00051">
    <property type="reaction ID" value="UER00464"/>
</dbReference>
<dbReference type="Proteomes" id="UP000000558">
    <property type="component" value="Chromosome"/>
</dbReference>
<dbReference type="Proteomes" id="UP000002519">
    <property type="component" value="Chromosome"/>
</dbReference>
<dbReference type="GO" id="GO:0004073">
    <property type="term" value="F:aspartate-semialdehyde dehydrogenase activity"/>
    <property type="evidence" value="ECO:0007669"/>
    <property type="project" value="UniProtKB-UniRule"/>
</dbReference>
<dbReference type="GO" id="GO:0051287">
    <property type="term" value="F:NAD binding"/>
    <property type="evidence" value="ECO:0007669"/>
    <property type="project" value="InterPro"/>
</dbReference>
<dbReference type="GO" id="GO:0050661">
    <property type="term" value="F:NADP binding"/>
    <property type="evidence" value="ECO:0007669"/>
    <property type="project" value="UniProtKB-UniRule"/>
</dbReference>
<dbReference type="GO" id="GO:0046983">
    <property type="term" value="F:protein dimerization activity"/>
    <property type="evidence" value="ECO:0007669"/>
    <property type="project" value="InterPro"/>
</dbReference>
<dbReference type="GO" id="GO:0071266">
    <property type="term" value="P:'de novo' L-methionine biosynthetic process"/>
    <property type="evidence" value="ECO:0007669"/>
    <property type="project" value="UniProtKB-UniRule"/>
</dbReference>
<dbReference type="GO" id="GO:0019877">
    <property type="term" value="P:diaminopimelate biosynthetic process"/>
    <property type="evidence" value="ECO:0007669"/>
    <property type="project" value="UniProtKB-UniRule"/>
</dbReference>
<dbReference type="GO" id="GO:0009097">
    <property type="term" value="P:isoleucine biosynthetic process"/>
    <property type="evidence" value="ECO:0007669"/>
    <property type="project" value="InterPro"/>
</dbReference>
<dbReference type="GO" id="GO:0009089">
    <property type="term" value="P:lysine biosynthetic process via diaminopimelate"/>
    <property type="evidence" value="ECO:0007669"/>
    <property type="project" value="UniProtKB-UniRule"/>
</dbReference>
<dbReference type="GO" id="GO:0009088">
    <property type="term" value="P:threonine biosynthetic process"/>
    <property type="evidence" value="ECO:0007669"/>
    <property type="project" value="UniProtKB-UniRule"/>
</dbReference>
<dbReference type="CDD" id="cd23938">
    <property type="entry name" value="ASADH_C_bac_like"/>
    <property type="match status" value="1"/>
</dbReference>
<dbReference type="CDD" id="cd02314">
    <property type="entry name" value="VcASADH1_like_N"/>
    <property type="match status" value="1"/>
</dbReference>
<dbReference type="FunFam" id="3.30.360.10:FF:000012">
    <property type="entry name" value="Aspartate-semialdehyde dehydrogenase"/>
    <property type="match status" value="1"/>
</dbReference>
<dbReference type="FunFam" id="3.40.50.720:FF:000152">
    <property type="entry name" value="Aspartate-semialdehyde dehydrogenase"/>
    <property type="match status" value="1"/>
</dbReference>
<dbReference type="Gene3D" id="3.30.360.10">
    <property type="entry name" value="Dihydrodipicolinate Reductase, domain 2"/>
    <property type="match status" value="1"/>
</dbReference>
<dbReference type="Gene3D" id="3.40.50.720">
    <property type="entry name" value="NAD(P)-binding Rossmann-like Domain"/>
    <property type="match status" value="1"/>
</dbReference>
<dbReference type="HAMAP" id="MF_02121">
    <property type="entry name" value="ASADH"/>
    <property type="match status" value="1"/>
</dbReference>
<dbReference type="InterPro" id="IPR000319">
    <property type="entry name" value="Asp-semialdehyde_DH_CS"/>
</dbReference>
<dbReference type="InterPro" id="IPR011534">
    <property type="entry name" value="Asp_ADH_gamma-type"/>
</dbReference>
<dbReference type="InterPro" id="IPR012080">
    <property type="entry name" value="Asp_semialdehyde_DH"/>
</dbReference>
<dbReference type="InterPro" id="IPR036291">
    <property type="entry name" value="NAD(P)-bd_dom_sf"/>
</dbReference>
<dbReference type="InterPro" id="IPR000534">
    <property type="entry name" value="Semialdehyde_DH_NAD-bd"/>
</dbReference>
<dbReference type="InterPro" id="IPR012280">
    <property type="entry name" value="Semialdhyde_DH_dimer_dom"/>
</dbReference>
<dbReference type="NCBIfam" id="TIGR01745">
    <property type="entry name" value="asd_gamma"/>
    <property type="match status" value="1"/>
</dbReference>
<dbReference type="NCBIfam" id="NF005144">
    <property type="entry name" value="PRK06598.1"/>
    <property type="match status" value="1"/>
</dbReference>
<dbReference type="PANTHER" id="PTHR46278:SF4">
    <property type="entry name" value="ASPARTATE-SEMIALDEHYDE DEHYDROGENASE"/>
    <property type="match status" value="1"/>
</dbReference>
<dbReference type="PANTHER" id="PTHR46278">
    <property type="entry name" value="DEHYDROGENASE, PUTATIVE-RELATED"/>
    <property type="match status" value="1"/>
</dbReference>
<dbReference type="Pfam" id="PF01118">
    <property type="entry name" value="Semialdhyde_dh"/>
    <property type="match status" value="1"/>
</dbReference>
<dbReference type="Pfam" id="PF02774">
    <property type="entry name" value="Semialdhyde_dhC"/>
    <property type="match status" value="1"/>
</dbReference>
<dbReference type="PIRSF" id="PIRSF000148">
    <property type="entry name" value="ASA_dh"/>
    <property type="match status" value="1"/>
</dbReference>
<dbReference type="SMART" id="SM00859">
    <property type="entry name" value="Semialdhyde_dh"/>
    <property type="match status" value="1"/>
</dbReference>
<dbReference type="SUPFAM" id="SSF55347">
    <property type="entry name" value="Glyceraldehyde-3-phosphate dehydrogenase-like, C-terminal domain"/>
    <property type="match status" value="1"/>
</dbReference>
<dbReference type="SUPFAM" id="SSF51735">
    <property type="entry name" value="NAD(P)-binding Rossmann-fold domains"/>
    <property type="match status" value="1"/>
</dbReference>
<dbReference type="PROSITE" id="PS01103">
    <property type="entry name" value="ASD"/>
    <property type="match status" value="1"/>
</dbReference>
<gene>
    <name evidence="2" type="primary">asd</name>
    <name type="ordered locus">Z4797</name>
    <name type="ordered locus">ECs4278</name>
</gene>
<name>DHAS_ECO57</name>
<evidence type="ECO:0000250" key="1"/>
<evidence type="ECO:0000255" key="2">
    <source>
        <dbReference type="HAMAP-Rule" id="MF_02121"/>
    </source>
</evidence>
<keyword id="KW-0028">Amino-acid biosynthesis</keyword>
<keyword id="KW-0220">Diaminopimelate biosynthesis</keyword>
<keyword id="KW-0457">Lysine biosynthesis</keyword>
<keyword id="KW-0486">Methionine biosynthesis</keyword>
<keyword id="KW-0521">NADP</keyword>
<keyword id="KW-0560">Oxidoreductase</keyword>
<keyword id="KW-1185">Reference proteome</keyword>
<keyword id="KW-0791">Threonine biosynthesis</keyword>
<sequence length="367" mass="40018">MKNVGFIGWRGMVGSVLMQRMVEERDFDAIRPVFFSTSQLGQAAPSFGGTTGTLQDAFDLEALKALDIIVTCQGGDYTNEIYPKLRESGWQGYWIDAASSLRMKDDAIIILDPVNQDVITDGLNNGIRTFVGGNCTVSLMLMSLGGLFANDLVDWVSVATYQAASGGGARHMRELLTQMGHLYGHVADELATPSSAILDIERKVTTLTRSGELPVDNFGVPLAGSLIPWIDKQLDNGQSREEWKGQAETNKILNTSSVIPVDGLCVRVGALRCHSQAFTIKLKKDVSIPTVEELLAAHNPWAKVVPNDREITMRELTPAAVTGTLTTPVGRLRKLNMGPEFLSAFTVGDQLLWGAAEPLRRMLRQLA</sequence>
<feature type="chain" id="PRO_0000141370" description="Aspartate-semialdehyde dehydrogenase">
    <location>
        <begin position="1"/>
        <end position="367"/>
    </location>
</feature>
<feature type="active site" description="Acyl-thioester intermediate" evidence="2">
    <location>
        <position position="135"/>
    </location>
</feature>
<feature type="active site" description="Proton acceptor" evidence="2">
    <location>
        <position position="274"/>
    </location>
</feature>
<feature type="binding site" evidence="2">
    <location>
        <begin position="10"/>
        <end position="13"/>
    </location>
    <ligand>
        <name>NADP(+)</name>
        <dbReference type="ChEBI" id="CHEBI:58349"/>
    </ligand>
</feature>
<feature type="binding site" evidence="2">
    <location>
        <begin position="37"/>
        <end position="38"/>
    </location>
    <ligand>
        <name>NADP(+)</name>
        <dbReference type="ChEBI" id="CHEBI:58349"/>
    </ligand>
</feature>
<feature type="binding site" evidence="2">
    <location>
        <position position="73"/>
    </location>
    <ligand>
        <name>NADP(+)</name>
        <dbReference type="ChEBI" id="CHEBI:58349"/>
    </ligand>
</feature>
<feature type="binding site" evidence="2">
    <location>
        <position position="102"/>
    </location>
    <ligand>
        <name>phosphate</name>
        <dbReference type="ChEBI" id="CHEBI:43474"/>
    </ligand>
</feature>
<feature type="binding site" evidence="2">
    <location>
        <position position="162"/>
    </location>
    <ligand>
        <name>substrate</name>
    </ligand>
</feature>
<feature type="binding site" evidence="2">
    <location>
        <begin position="165"/>
        <end position="166"/>
    </location>
    <ligand>
        <name>NADP(+)</name>
        <dbReference type="ChEBI" id="CHEBI:58349"/>
    </ligand>
</feature>
<feature type="binding site" evidence="2">
    <location>
        <position position="193"/>
    </location>
    <ligand>
        <name>NADP(+)</name>
        <dbReference type="ChEBI" id="CHEBI:58349"/>
    </ligand>
</feature>
<feature type="binding site" evidence="2">
    <location>
        <position position="241"/>
    </location>
    <ligand>
        <name>substrate</name>
    </ligand>
</feature>
<feature type="binding site" evidence="2">
    <location>
        <position position="244"/>
    </location>
    <ligand>
        <name>phosphate</name>
        <dbReference type="ChEBI" id="CHEBI:43474"/>
    </ligand>
</feature>
<feature type="binding site" evidence="2">
    <location>
        <position position="267"/>
    </location>
    <ligand>
        <name>substrate</name>
    </ligand>
</feature>
<feature type="binding site" evidence="2">
    <location>
        <position position="350"/>
    </location>
    <ligand>
        <name>NADP(+)</name>
        <dbReference type="ChEBI" id="CHEBI:58349"/>
    </ligand>
</feature>
<feature type="modified residue" description="S-cysteinyl cysteine; in inhibited form" evidence="1">
    <location>
        <position position="135"/>
    </location>
</feature>
<protein>
    <recommendedName>
        <fullName evidence="2">Aspartate-semialdehyde dehydrogenase</fullName>
        <shortName evidence="2">ASA dehydrogenase</shortName>
        <shortName evidence="2">ASADH</shortName>
        <ecNumber evidence="2">1.2.1.11</ecNumber>
    </recommendedName>
    <alternativeName>
        <fullName evidence="2">Aspartate-beta-semialdehyde dehydrogenase</fullName>
    </alternativeName>
</protein>
<proteinExistence type="inferred from homology"/>
<comment type="function">
    <text evidence="2">Catalyzes the NADPH-dependent formation of L-aspartate-semialdehyde (L-ASA) by the reductive dephosphorylation of L-aspartyl-4-phosphate.</text>
</comment>
<comment type="catalytic activity">
    <reaction evidence="2">
        <text>L-aspartate 4-semialdehyde + phosphate + NADP(+) = 4-phospho-L-aspartate + NADPH + H(+)</text>
        <dbReference type="Rhea" id="RHEA:24284"/>
        <dbReference type="ChEBI" id="CHEBI:15378"/>
        <dbReference type="ChEBI" id="CHEBI:43474"/>
        <dbReference type="ChEBI" id="CHEBI:57535"/>
        <dbReference type="ChEBI" id="CHEBI:57783"/>
        <dbReference type="ChEBI" id="CHEBI:58349"/>
        <dbReference type="ChEBI" id="CHEBI:537519"/>
        <dbReference type="EC" id="1.2.1.11"/>
    </reaction>
</comment>
<comment type="pathway">
    <text evidence="2">Amino-acid biosynthesis; L-lysine biosynthesis via DAP pathway; (S)-tetrahydrodipicolinate from L-aspartate: step 2/4.</text>
</comment>
<comment type="pathway">
    <text evidence="2">Amino-acid biosynthesis; L-methionine biosynthesis via de novo pathway; L-homoserine from L-aspartate: step 2/3.</text>
</comment>
<comment type="pathway">
    <text evidence="2">Amino-acid biosynthesis; L-threonine biosynthesis; L-threonine from L-aspartate: step 2/5.</text>
</comment>
<comment type="subunit">
    <text evidence="2">Homodimer.</text>
</comment>
<comment type="similarity">
    <text evidence="2">Belongs to the aspartate-semialdehyde dehydrogenase family.</text>
</comment>
<reference key="1">
    <citation type="journal article" date="2001" name="Nature">
        <title>Genome sequence of enterohaemorrhagic Escherichia coli O157:H7.</title>
        <authorList>
            <person name="Perna N.T."/>
            <person name="Plunkett G. III"/>
            <person name="Burland V."/>
            <person name="Mau B."/>
            <person name="Glasner J.D."/>
            <person name="Rose D.J."/>
            <person name="Mayhew G.F."/>
            <person name="Evans P.S."/>
            <person name="Gregor J."/>
            <person name="Kirkpatrick H.A."/>
            <person name="Posfai G."/>
            <person name="Hackett J."/>
            <person name="Klink S."/>
            <person name="Boutin A."/>
            <person name="Shao Y."/>
            <person name="Miller L."/>
            <person name="Grotbeck E.J."/>
            <person name="Davis N.W."/>
            <person name="Lim A."/>
            <person name="Dimalanta E.T."/>
            <person name="Potamousis K."/>
            <person name="Apodaca J."/>
            <person name="Anantharaman T.S."/>
            <person name="Lin J."/>
            <person name="Yen G."/>
            <person name="Schwartz D.C."/>
            <person name="Welch R.A."/>
            <person name="Blattner F.R."/>
        </authorList>
    </citation>
    <scope>NUCLEOTIDE SEQUENCE [LARGE SCALE GENOMIC DNA]</scope>
    <source>
        <strain>O157:H7 / EDL933 / ATCC 700927 / EHEC</strain>
    </source>
</reference>
<reference key="2">
    <citation type="journal article" date="2001" name="DNA Res.">
        <title>Complete genome sequence of enterohemorrhagic Escherichia coli O157:H7 and genomic comparison with a laboratory strain K-12.</title>
        <authorList>
            <person name="Hayashi T."/>
            <person name="Makino K."/>
            <person name="Ohnishi M."/>
            <person name="Kurokawa K."/>
            <person name="Ishii K."/>
            <person name="Yokoyama K."/>
            <person name="Han C.-G."/>
            <person name="Ohtsubo E."/>
            <person name="Nakayama K."/>
            <person name="Murata T."/>
            <person name="Tanaka M."/>
            <person name="Tobe T."/>
            <person name="Iida T."/>
            <person name="Takami H."/>
            <person name="Honda T."/>
            <person name="Sasakawa C."/>
            <person name="Ogasawara N."/>
            <person name="Yasunaga T."/>
            <person name="Kuhara S."/>
            <person name="Shiba T."/>
            <person name="Hattori M."/>
            <person name="Shinagawa H."/>
        </authorList>
    </citation>
    <scope>NUCLEOTIDE SEQUENCE [LARGE SCALE GENOMIC DNA]</scope>
    <source>
        <strain>O157:H7 / Sakai / RIMD 0509952 / EHEC</strain>
    </source>
</reference>
<accession>P0A9R0</accession>
<accession>P00353</accession>
<organism>
    <name type="scientific">Escherichia coli O157:H7</name>
    <dbReference type="NCBI Taxonomy" id="83334"/>
    <lineage>
        <taxon>Bacteria</taxon>
        <taxon>Pseudomonadati</taxon>
        <taxon>Pseudomonadota</taxon>
        <taxon>Gammaproteobacteria</taxon>
        <taxon>Enterobacterales</taxon>
        <taxon>Enterobacteriaceae</taxon>
        <taxon>Escherichia</taxon>
    </lineage>
</organism>